<proteinExistence type="evidence at protein level"/>
<comment type="function">
    <text evidence="7 8 9 10 17 18">Tumor suppressor serine/threonine-protein kinase involved in mTORC1 signaling and post-transcriptional regulation. Phosphorylates FOXO3, ERK3/MAPK6, ERK4/MAPK4, HSP27/HSPB1, p53/TP53 and RHEB. Acts as a tumor suppressor by mediating Ras-induced senescence and phosphorylating p53/TP53. Involved in post-transcriptional regulation of MYC by mediating phosphorylation of FOXO3: phosphorylation of FOXO3 leads to promote nuclear localization of FOXO3, enabling expression of miR-34b and miR-34c, 2 post-transcriptional regulators of MYC that bind to the 3'UTR of MYC transcript and prevent MYC translation. Acts as a negative regulator of mTORC1 signaling by mediating phosphorylation and inhibition of RHEB. Part of the atypical MAPK signaling via its interaction with ERK3/MAPK6 or ERK4/MAPK4: the precise role of the complex formed with ERK3/MAPK6 or ERK4/MAPK4 is still unclear, but the complex follows a complex set of phosphorylation events: upon interaction with atypical MAPK (ERK3/MAPK6 or ERK4/MAPK4), ERK3/MAPK6 (or ERK4/MAPK4) is phosphorylated and then mediates phosphorylation and activation of MAPKAPK5, which in turn phosphorylates ERK3/MAPK6 (or ERK4/MAPK4). Mediates phosphorylation of HSP27/HSPB1 in response to PKA/PRKACA stimulation, inducing F-actin rearrangement.</text>
</comment>
<comment type="catalytic activity">
    <reaction evidence="15">
        <text>L-seryl-[protein] + ATP = O-phospho-L-seryl-[protein] + ADP + H(+)</text>
        <dbReference type="Rhea" id="RHEA:17989"/>
        <dbReference type="Rhea" id="RHEA-COMP:9863"/>
        <dbReference type="Rhea" id="RHEA-COMP:11604"/>
        <dbReference type="ChEBI" id="CHEBI:15378"/>
        <dbReference type="ChEBI" id="CHEBI:29999"/>
        <dbReference type="ChEBI" id="CHEBI:30616"/>
        <dbReference type="ChEBI" id="CHEBI:83421"/>
        <dbReference type="ChEBI" id="CHEBI:456216"/>
        <dbReference type="EC" id="2.7.11.1"/>
    </reaction>
</comment>
<comment type="catalytic activity">
    <reaction evidence="15">
        <text>L-threonyl-[protein] + ATP = O-phospho-L-threonyl-[protein] + ADP + H(+)</text>
        <dbReference type="Rhea" id="RHEA:46608"/>
        <dbReference type="Rhea" id="RHEA-COMP:11060"/>
        <dbReference type="Rhea" id="RHEA-COMP:11605"/>
        <dbReference type="ChEBI" id="CHEBI:15378"/>
        <dbReference type="ChEBI" id="CHEBI:30013"/>
        <dbReference type="ChEBI" id="CHEBI:30616"/>
        <dbReference type="ChEBI" id="CHEBI:61977"/>
        <dbReference type="ChEBI" id="CHEBI:456216"/>
        <dbReference type="EC" id="2.7.11.1"/>
    </reaction>
</comment>
<comment type="activity regulation">
    <text evidence="15 19">Activated following phosphorylation at Thr-182 by p38-alpha/MAPK14, p38-beta/MAPK11, ERK2/MAPK1, ERK3/MAPK6, and ERK4/MAPK4. Activated by stress-related extracellular stimuli; such as H(2)O(2), arsenite, anisomycin TNF alpha and also PMA and the calcium ionophore A23187; but to a lesser extent. In vitro, activated by SQSTM1. Inhibited by diterpenoid alkaloid noroxoaconitine.</text>
</comment>
<comment type="subunit">
    <text evidence="1 7 8 9 12 13 14">Interacts with SQSTM1 (By similarity). Interacts with ERK3/MAPK6 and ERK4/MAPK4 (via FRIEDE motif); the interaction is direct. Interacts with YWHAE; the interaction prevents phosphorylation of HSP27/HSPB1 leading to disrupt F-actin polymerization.</text>
</comment>
<comment type="subcellular location">
    <subcellularLocation>
        <location>Cytoplasm</location>
    </subcellularLocation>
    <subcellularLocation>
        <location>Nucleus</location>
    </subcellularLocation>
    <text>Translocates to the cytoplasm following phosphorylation and activation. Interaction with ERK3/MAPK6 or ERK4/MAPK4 and phosphorylation at Thr-182, activates the protein kinase activity, followed by translocation to the cytoplasm. Phosphorylation by PKA/PRKACA at Ser-115 also induces nuclear export.</text>
</comment>
<comment type="alternative products">
    <event type="alternative splicing"/>
    <isoform>
        <id>O54992-1</id>
        <name>1</name>
        <name>MK-5 type 1</name>
        <sequence type="displayed"/>
    </isoform>
    <isoform>
        <id>O54992-2</id>
        <name>2</name>
        <name>MK-5 type 3</name>
        <sequence type="described" ref="VSP_011600"/>
    </isoform>
    <isoform>
        <id>O54992-3</id>
        <name>3</name>
        <name>MK-5 type 4</name>
        <sequence type="described" ref="VSP_011599"/>
    </isoform>
    <isoform>
        <id>O54992-4</id>
        <name>4</name>
        <name>MK-5 type 5</name>
        <sequence type="described" ref="VSP_011599 VSP_011598"/>
    </isoform>
    <isoform>
        <id>O54992-5</id>
        <name>5</name>
        <name>MK-5 type 2</name>
        <sequence type="described" ref="VSP_011598"/>
    </isoform>
</comment>
<comment type="tissue specificity">
    <text evidence="19">Expressed ubiquitously.</text>
</comment>
<comment type="PTM">
    <text evidence="7 8 16 19">Phosphorylated on Thr-182 ERK3/MAPK6 or ERK4/MAPK4; which is the regulatory phosphorylation site and is located on the T-loop/loop 12, leading to activation. Phosphorylation at Thr-182 by p38-alpha/MAPK14, p38-beta/MAPK11 is subject to debate. Phosphorylated at Ser-115 by PKA/PRKACA, leading to localization to the cytoplasm. Autophosphorylated.</text>
</comment>
<comment type="disruption phenotype">
    <text evidence="6 7 10">Phenotypes are different depending on reports. According to a first report, mice are viable and fertile and do not show changes in tissue morphology and behavior: they exhibit the same susceptibility to LPS-induced endotoxic shock as wild-type animals and do not show the defects in LPS-induced biosynthesis of inflammatory cytokines known to occur with Mapkapk2-deficient animals (PubMed:14560018). According to another report, both homozygous and heterozygous mutant mice are highly susceptible to skin carcinogenesis induced by DMBA (PubMed:17254968). According to a third report, mutant show embryonic lethality around 11 dpc in a C57BL/6 background (PubMed:15538386).</text>
</comment>
<comment type="similarity">
    <text evidence="21">Belongs to the protein kinase superfamily. CAMK Ser/Thr protein kinase family.</text>
</comment>
<comment type="caution">
    <text evidence="22 23">The role of p38 MAPK kinases is unclear in phosphorylation and activation of Mapkapk5. According to some reports, it interacts and is phosphorylated by p38-alpha/MAPK14 and p38-beta/MAPK11 (PubMed:9480836). According to other reports, it is not activated by p38-alpha/MAPK14 and p38-beta/MAPK11 (PubMed:14560018). An explanation for these discrepancies, might be that the interaction with p38 MAPK kinases is weak and occurs only under specific conditions.</text>
</comment>
<keyword id="KW-0025">Alternative splicing</keyword>
<keyword id="KW-0067">ATP-binding</keyword>
<keyword id="KW-0175">Coiled coil</keyword>
<keyword id="KW-0963">Cytoplasm</keyword>
<keyword id="KW-0418">Kinase</keyword>
<keyword id="KW-0547">Nucleotide-binding</keyword>
<keyword id="KW-0539">Nucleus</keyword>
<keyword id="KW-0597">Phosphoprotein</keyword>
<keyword id="KW-1185">Reference proteome</keyword>
<keyword id="KW-0723">Serine/threonine-protein kinase</keyword>
<keyword id="KW-0808">Transferase</keyword>
<keyword id="KW-0043">Tumor suppressor</keyword>
<gene>
    <name type="primary">Mapkapk5</name>
</gene>
<protein>
    <recommendedName>
        <fullName>MAP kinase-activated protein kinase 5</fullName>
        <shortName>MAPK-activated protein kinase 5</shortName>
        <shortName>MAPKAP kinase 5</shortName>
        <shortName>MAPKAPK-5</shortName>
        <ecNumber>2.7.11.1</ecNumber>
    </recommendedName>
</protein>
<evidence type="ECO:0000250" key="1"/>
<evidence type="ECO:0000250" key="2">
    <source>
        <dbReference type="UniProtKB" id="Q8IW41"/>
    </source>
</evidence>
<evidence type="ECO:0000255" key="3"/>
<evidence type="ECO:0000255" key="4">
    <source>
        <dbReference type="PROSITE-ProRule" id="PRU00159"/>
    </source>
</evidence>
<evidence type="ECO:0000255" key="5">
    <source>
        <dbReference type="PROSITE-ProRule" id="PRU10027"/>
    </source>
</evidence>
<evidence type="ECO:0000269" key="6">
    <source>
    </source>
</evidence>
<evidence type="ECO:0000269" key="7">
    <source>
    </source>
</evidence>
<evidence type="ECO:0000269" key="8">
    <source>
    </source>
</evidence>
<evidence type="ECO:0000269" key="9">
    <source>
    </source>
</evidence>
<evidence type="ECO:0000269" key="10">
    <source>
    </source>
</evidence>
<evidence type="ECO:0000269" key="11">
    <source>
    </source>
</evidence>
<evidence type="ECO:0000269" key="12">
    <source>
    </source>
</evidence>
<evidence type="ECO:0000269" key="13">
    <source>
    </source>
</evidence>
<evidence type="ECO:0000269" key="14">
    <source>
    </source>
</evidence>
<evidence type="ECO:0000269" key="15">
    <source>
    </source>
</evidence>
<evidence type="ECO:0000269" key="16">
    <source>
    </source>
</evidence>
<evidence type="ECO:0000269" key="17">
    <source>
    </source>
</evidence>
<evidence type="ECO:0000269" key="18">
    <source>
    </source>
</evidence>
<evidence type="ECO:0000269" key="19">
    <source>
    </source>
</evidence>
<evidence type="ECO:0000303" key="20">
    <source ref="2"/>
</evidence>
<evidence type="ECO:0000305" key="21"/>
<evidence type="ECO:0000305" key="22">
    <source>
    </source>
</evidence>
<evidence type="ECO:0000305" key="23">
    <source>
    </source>
</evidence>
<organism>
    <name type="scientific">Mus musculus</name>
    <name type="common">Mouse</name>
    <dbReference type="NCBI Taxonomy" id="10090"/>
    <lineage>
        <taxon>Eukaryota</taxon>
        <taxon>Metazoa</taxon>
        <taxon>Chordata</taxon>
        <taxon>Craniata</taxon>
        <taxon>Vertebrata</taxon>
        <taxon>Euteleostomi</taxon>
        <taxon>Mammalia</taxon>
        <taxon>Eutheria</taxon>
        <taxon>Euarchontoglires</taxon>
        <taxon>Glires</taxon>
        <taxon>Rodentia</taxon>
        <taxon>Myomorpha</taxon>
        <taxon>Muroidea</taxon>
        <taxon>Muridae</taxon>
        <taxon>Murinae</taxon>
        <taxon>Mus</taxon>
        <taxon>Mus</taxon>
    </lineage>
</organism>
<name>MAPK5_MOUSE</name>
<sequence>MSEDSDMEKAIKETSILEEYSINWTQKLGAGISGPVRVCVKKSTQERFALKILLDRPKARNEVRLHMMCATHPNIVQIIEVFANSVQFPHESSPRARLLIVMEMMEGGELFHRISQHRHFTEKQASQVTKQIALALQHCHLLNIAHRDLKPENLLFKDNSLDAPVKLCDFGFAKVDQGDLMTPQFTPYYVAPQVLEAQRRHQKEKSGIIPTSPTPYTYNKSCDLWSLGVIIYVMLCGYPPFYSKHHSRTIPKDMRKKIMTGSFEFPEEEWSQISEMAKDVVRKLLKVKPEERLTIEGVLDHPWLNSTEALDNVLPSAQLMMDKAVVAGIQQAHAEQLANMRIQDLKVSLKPLHSVNNPILRKRKLLGTKPKDGIYIHDHENGTEDSNVALEKLRDVIAQCILPQAGKGENEDEKLNEVMQEAWKYNRECKLLRDALQSFSWNGRGFTDKVDRLKLAEVVKQVIEEQTLPHEPQ</sequence>
<reference key="1">
    <citation type="journal article" date="1998" name="Biochem. Biophys. Res. Commun.">
        <title>MAPKAPK5, a novel mitogen-activated protein kinase (MAPK)-activated protein kinase, is a substrate of the extracellular-regulated kinase (ERK) and p38 kinase.</title>
        <authorList>
            <person name="Ni H."/>
            <person name="Wang X.S."/>
            <person name="Diener K."/>
            <person name="Yao Z."/>
        </authorList>
    </citation>
    <scope>NUCLEOTIDE SEQUENCE [MRNA] (ISOFORM 1)</scope>
    <scope>TISSUE SPECIFICITY</scope>
    <scope>MUTAGENESIS OF LYS-51</scope>
    <scope>ACTIVITY REGULATION</scope>
    <scope>PHOSPHORYLATION BY ERK2/MAPK1 AND MAPK14</scope>
    <source>
        <tissue>Spleen</tissue>
    </source>
</reference>
<reference key="2">
    <citation type="submission" date="2004-01" db="EMBL/GenBank/DDBJ databases">
        <title>Novel splice variants of MK5 from mouse heart.</title>
        <authorList>
            <person name="Benoit M.-J."/>
            <person name="Moise N."/>
            <person name="Mamarbachi A.M."/>
            <person name="Allen B.G."/>
        </authorList>
    </citation>
    <scope>NUCLEOTIDE SEQUENCE [MRNA] (ISOFORMS 2; 3; 4 AND 5)</scope>
</reference>
<reference key="3">
    <citation type="journal article" date="2009" name="PLoS Biol.">
        <title>Lineage-specific biology revealed by a finished genome assembly of the mouse.</title>
        <authorList>
            <person name="Church D.M."/>
            <person name="Goodstadt L."/>
            <person name="Hillier L.W."/>
            <person name="Zody M.C."/>
            <person name="Goldstein S."/>
            <person name="She X."/>
            <person name="Bult C.J."/>
            <person name="Agarwala R."/>
            <person name="Cherry J.L."/>
            <person name="DiCuccio M."/>
            <person name="Hlavina W."/>
            <person name="Kapustin Y."/>
            <person name="Meric P."/>
            <person name="Maglott D."/>
            <person name="Birtle Z."/>
            <person name="Marques A.C."/>
            <person name="Graves T."/>
            <person name="Zhou S."/>
            <person name="Teague B."/>
            <person name="Potamousis K."/>
            <person name="Churas C."/>
            <person name="Place M."/>
            <person name="Herschleb J."/>
            <person name="Runnheim R."/>
            <person name="Forrest D."/>
            <person name="Amos-Landgraf J."/>
            <person name="Schwartz D.C."/>
            <person name="Cheng Z."/>
            <person name="Lindblad-Toh K."/>
            <person name="Eichler E.E."/>
            <person name="Ponting C.P."/>
        </authorList>
    </citation>
    <scope>NUCLEOTIDE SEQUENCE [LARGE SCALE GENOMIC DNA]</scope>
    <source>
        <strain>C57BL/6J</strain>
    </source>
</reference>
<reference key="4">
    <citation type="journal article" date="2004" name="Genome Res.">
        <title>The status, quality, and expansion of the NIH full-length cDNA project: the Mammalian Gene Collection (MGC).</title>
        <authorList>
            <consortium name="The MGC Project Team"/>
        </authorList>
    </citation>
    <scope>NUCLEOTIDE SEQUENCE [LARGE SCALE MRNA] (ISOFORM 1)</scope>
    <source>
        <strain>FVB/N-3</strain>
        <tissue>Mammary tumor</tissue>
    </source>
</reference>
<reference key="5">
    <citation type="journal article" date="2003" name="Mol. Cell. Biol.">
        <title>Elimination of protein kinase MK5/PRAK activity by targeted homologous recombination.</title>
        <authorList>
            <person name="Shi Y."/>
            <person name="Kotlyarov A."/>
            <person name="Laabeta K."/>
            <person name="Gruber A.D."/>
            <person name="Butt E."/>
            <person name="Marcus K."/>
            <person name="Meyer H.E."/>
            <person name="Friedrich A."/>
            <person name="Volk H.D."/>
            <person name="Gaestel M."/>
        </authorList>
    </citation>
    <scope>DISRUPTION PHENOTYPE</scope>
</reference>
<reference key="6">
    <citation type="journal article" date="2004" name="EMBO J.">
        <title>Scaffolding by ERK3 regulates MK5 in development.</title>
        <authorList>
            <person name="Schumacher S."/>
            <person name="Laass K."/>
            <person name="Kant S."/>
            <person name="Shi Y."/>
            <person name="Visel A."/>
            <person name="Gruber A.D."/>
            <person name="Kotlyarov A."/>
            <person name="Gaestel M."/>
        </authorList>
    </citation>
    <scope>FUNCTION IN PHOSPHORYLATION OF MAPK6</scope>
    <scope>SUBCELLULAR LOCATION</scope>
    <scope>INTERACTION WITH MAPK6</scope>
    <scope>AUTOPHOSPHORYLATION</scope>
    <scope>PHOSPHORYLATION AT THR-182</scope>
    <scope>MUTAGENESIS OF LYS-51 AND THR-182</scope>
    <scope>DISRUPTION PHENOTYPE</scope>
</reference>
<reference key="7">
    <citation type="journal article" date="2004" name="EMBO J.">
        <title>Activation of MK5/PRAK by the atypical MAP kinase ERK3 defines a novel signal transduction pathway.</title>
        <authorList>
            <person name="Seternes O.M."/>
            <person name="Mikalsen T."/>
            <person name="Johansen B."/>
            <person name="Michaelsen E."/>
            <person name="Armstrong C.G."/>
            <person name="Morrice N.A."/>
            <person name="Turgeon B."/>
            <person name="Meloche S."/>
            <person name="Moens U."/>
            <person name="Keyse S.M."/>
        </authorList>
    </citation>
    <scope>FUNCTION IN PHOSPHORYLATION OF MAPK6</scope>
    <scope>SUBCELLULAR LOCATION</scope>
    <scope>INTERACTION WITH MAPK6</scope>
    <scope>PHOSPHORYLATION AT THR-182</scope>
    <scope>MUTAGENESIS OF THR-182</scope>
</reference>
<reference key="8">
    <citation type="journal article" date="2006" name="J. Biol. Chem.">
        <title>Characterization of the atypical MAPK ERK4 and its activation of the MAPK-activated protein kinase MK5.</title>
        <authorList>
            <person name="Kant S."/>
            <person name="Schumacher S."/>
            <person name="Singh M.K."/>
            <person name="Kispert A."/>
            <person name="Kotlyarov A."/>
            <person name="Gaestel M."/>
        </authorList>
    </citation>
    <scope>FUNCTION IN PHOSPHORYLATION OF MAPK4</scope>
    <scope>SUBCELLULAR LOCATION</scope>
    <scope>INTERACTION WITH MAPK4</scope>
</reference>
<reference key="9">
    <citation type="journal article" date="2007" name="Behav. Brain Funct.">
        <title>Transgenic mice expressing constitutive active MAPKAPK5 display gender-dependent differences in exploration and activity.</title>
        <authorList>
            <person name="Gerits N."/>
            <person name="Van Belle W."/>
            <person name="Moens U."/>
        </authorList>
    </citation>
    <scope>MUTAGENESIS OF LEU-337</scope>
</reference>
<reference key="10">
    <citation type="journal article" date="2007" name="Cell">
        <title>PRAK is essential for ras-induced senescence and tumor suppression.</title>
        <authorList>
            <person name="Sun P."/>
            <person name="Yoshizuka N."/>
            <person name="New L."/>
            <person name="Moser B.A."/>
            <person name="Li Y."/>
            <person name="Liao R."/>
            <person name="Xie C."/>
            <person name="Chen J."/>
            <person name="Deng Q."/>
            <person name="Yamout M."/>
            <person name="Dong M.Q."/>
            <person name="Frangou C.G."/>
            <person name="Yates J.R. III"/>
            <person name="Wright P.E."/>
            <person name="Han J."/>
        </authorList>
    </citation>
    <scope>FUNCTION IN PHOSPHORYLATION OF TP53</scope>
    <scope>DISRUPTION PHENOTYPE</scope>
    <scope>MUTAGENESIS OF LYS-51 AND THR-182</scope>
</reference>
<reference key="11">
    <citation type="journal article" date="2007" name="J. Biol. Chem.">
        <title>Modulation of F-actin rearrangement by the cyclic AMP/cAMP-dependent protein kinase (PKA) pathway is mediated by MAPK-activated protein kinase 5 and requires PKA-induced nuclear export of MK5.</title>
        <authorList>
            <person name="Gerits N."/>
            <person name="Mikalsen T."/>
            <person name="Kostenko S."/>
            <person name="Shiryaev A."/>
            <person name="Johannessen M."/>
            <person name="Moens U."/>
        </authorList>
    </citation>
    <scope>SUBCELLULAR LOCATION</scope>
</reference>
<reference key="12">
    <citation type="journal article" date="2008" name="Biochem. J.">
        <title>The Ser(186) phospho-acceptor site within ERK4 is essential for its ability to interact with and activate PRAK/MK5.</title>
        <authorList>
            <person name="Perander M."/>
            <person name="Aberg E."/>
            <person name="Johansen B."/>
            <person name="Dreyer B."/>
            <person name="Guldvik I.J."/>
            <person name="Outzen H."/>
            <person name="Keyse S.M."/>
            <person name="Seternes O.M."/>
        </authorList>
    </citation>
    <scope>INTERACTION WITH MAPK4</scope>
</reference>
<reference key="13">
    <citation type="journal article" date="2008" name="J. Biol. Chem.">
        <title>Determinants that control the distinct subcellular localization of p38alpha-PRAK and p38beta-PRAK complexes.</title>
        <authorList>
            <person name="Li Q."/>
            <person name="Zhang N."/>
            <person name="Zhang D."/>
            <person name="Wang Y."/>
            <person name="Lin T."/>
            <person name="Wang Y."/>
            <person name="Zhou H."/>
            <person name="Ye Z."/>
            <person name="Zhang F."/>
            <person name="Lin S.C."/>
            <person name="Han J."/>
        </authorList>
    </citation>
    <scope>SUBCELLULAR LOCATION</scope>
</reference>
<reference key="14">
    <citation type="journal article" date="2008" name="J. Cell. Physiol.">
        <title>Activation loop phosphorylation of the atypical MAP kinases ERK3 and ERK4 is required for binding, activation and cytoplasmic relocalization of MK5.</title>
        <authorList>
            <person name="Deleris P."/>
            <person name="Rousseau J."/>
            <person name="Coulombe P."/>
            <person name="Rodier G."/>
            <person name="Tanguay P.L."/>
            <person name="Meloche S."/>
        </authorList>
    </citation>
    <scope>INTERACTION WITH MAPK4 AND MAPK6</scope>
</reference>
<reference key="15">
    <citation type="journal article" date="2009" name="J. Biol. Chem.">
        <title>Docking of PRAK/MK5 to the atypical MAPKs ERK3 and ERK4 defines a novel MAPK interaction motif.</title>
        <authorList>
            <person name="Aberg E."/>
            <person name="Torgersen K.M."/>
            <person name="Johansen B."/>
            <person name="Keyse S.M."/>
            <person name="Perander M."/>
            <person name="Seternes O.M."/>
        </authorList>
    </citation>
    <scope>INTERACTION WITH MAPK4 AND MAPK6</scope>
</reference>
<reference key="16">
    <citation type="journal article" date="2011" name="Cell. Mol. Life Sci.">
        <title>The diterpenoid alkaloid noroxoaconitine is a Mapkap kinase 5 (MK5/PRAK) inhibitor.</title>
        <authorList>
            <person name="Kostenko S."/>
            <person name="Khan M.T."/>
            <person name="Sylte I."/>
            <person name="Moens U."/>
        </authorList>
    </citation>
    <scope>CATALYTIC ACTIVITY</scope>
    <scope>SUBCELLULAR LOCATION</scope>
    <scope>ACTIVITY REGULATION</scope>
    <scope>MUTAGENESIS OF THR-182</scope>
</reference>
<reference key="17">
    <citation type="journal article" date="2011" name="Cell. Mol. Life Sci.">
        <title>Serine residue 115 of MAPK-activated protein kinase MK5 is crucial for its PKA-regulated nuclear export and biological function.</title>
        <authorList>
            <person name="Kostenko S."/>
            <person name="Shiryaev A."/>
            <person name="Gerits N."/>
            <person name="Dumitriu G."/>
            <person name="Klenow H."/>
            <person name="Johannessen M."/>
            <person name="Moens U."/>
        </authorList>
    </citation>
    <scope>PHOSPHORYLATION AT SER-115</scope>
    <scope>SUBCELLULAR LOCATION</scope>
    <scope>MUTAGENESIS OF SER-115</scope>
</reference>
<reference key="18">
    <citation type="journal article" date="2011" name="J. Mol. Signal.">
        <title>Distinct roles of MK2 and MK5 in cAMP/PKA- and stress/p38MAPK-induced heat shock protein 27 phosphorylation.</title>
        <authorList>
            <person name="Shiryaev A."/>
            <person name="Dumitriu G."/>
            <person name="Moens U."/>
        </authorList>
    </citation>
    <scope>FUNCTION IN PHOSPHORYLATION OF HSPB1</scope>
</reference>
<reference key="19">
    <citation type="journal article" date="2011" name="Nat. Cell Biol.">
        <title>Inactivation of Rheb by PRAK-mediated phosphorylation is essential for energy-depletion-induced suppression of mTORC1.</title>
        <authorList>
            <person name="Zheng M."/>
            <person name="Wang Y.H."/>
            <person name="Wu X.N."/>
            <person name="Wu S.Q."/>
            <person name="Lu B.J."/>
            <person name="Dong M.Q."/>
            <person name="Zhang H."/>
            <person name="Sun P."/>
            <person name="Lin S.C."/>
            <person name="Guan K.L."/>
            <person name="Han J."/>
        </authorList>
    </citation>
    <scope>FUNCTION IN PHOSPHORYLATION OF RHEB</scope>
    <scope>MUTAGENESIS OF LYS-51</scope>
</reference>
<dbReference type="EC" id="2.7.11.1"/>
<dbReference type="EMBL" id="AF039840">
    <property type="protein sequence ID" value="AAC40047.1"/>
    <property type="molecule type" value="mRNA"/>
</dbReference>
<dbReference type="EMBL" id="AY533679">
    <property type="protein sequence ID" value="AAS22330.1"/>
    <property type="molecule type" value="mRNA"/>
</dbReference>
<dbReference type="EMBL" id="AY533680">
    <property type="protein sequence ID" value="AAS22331.2"/>
    <property type="molecule type" value="mRNA"/>
</dbReference>
<dbReference type="EMBL" id="AY533681">
    <property type="protein sequence ID" value="AAS22332.1"/>
    <property type="molecule type" value="mRNA"/>
</dbReference>
<dbReference type="EMBL" id="AY533682">
    <property type="protein sequence ID" value="AAS22333.1"/>
    <property type="molecule type" value="mRNA"/>
</dbReference>
<dbReference type="EMBL" id="AC155316">
    <property type="status" value="NOT_ANNOTATED_CDS"/>
    <property type="molecule type" value="Genomic_DNA"/>
</dbReference>
<dbReference type="EMBL" id="BC019184">
    <property type="protein sequence ID" value="AAH19184.1"/>
    <property type="molecule type" value="mRNA"/>
</dbReference>
<dbReference type="CCDS" id="CCDS39248.1">
    <molecule id="O54992-1"/>
</dbReference>
<dbReference type="PIR" id="JC5952">
    <property type="entry name" value="JC5952"/>
</dbReference>
<dbReference type="RefSeq" id="NP_034895.1">
    <molecule id="O54992-1"/>
    <property type="nucleotide sequence ID" value="NM_010765.2"/>
</dbReference>
<dbReference type="SMR" id="O54992"/>
<dbReference type="BioGRID" id="201309">
    <property type="interactions" value="11"/>
</dbReference>
<dbReference type="FunCoup" id="O54992">
    <property type="interactions" value="3788"/>
</dbReference>
<dbReference type="IntAct" id="O54992">
    <property type="interactions" value="3"/>
</dbReference>
<dbReference type="STRING" id="10090.ENSMUSP00000031410"/>
<dbReference type="GlyGen" id="O54992">
    <property type="glycosylation" value="2 sites, 1 O-linked glycan (2 sites)"/>
</dbReference>
<dbReference type="iPTMnet" id="O54992"/>
<dbReference type="PhosphoSitePlus" id="O54992"/>
<dbReference type="PaxDb" id="10090-ENSMUSP00000031410"/>
<dbReference type="PeptideAtlas" id="O54992"/>
<dbReference type="ProteomicsDB" id="292019">
    <molecule id="O54992-1"/>
</dbReference>
<dbReference type="ProteomicsDB" id="292020">
    <molecule id="O54992-2"/>
</dbReference>
<dbReference type="ProteomicsDB" id="292021">
    <molecule id="O54992-3"/>
</dbReference>
<dbReference type="ProteomicsDB" id="292022">
    <molecule id="O54992-4"/>
</dbReference>
<dbReference type="ProteomicsDB" id="292023">
    <molecule id="O54992-5"/>
</dbReference>
<dbReference type="DNASU" id="17165"/>
<dbReference type="Ensembl" id="ENSMUST00000031410.14">
    <molecule id="O54992-1"/>
    <property type="protein sequence ID" value="ENSMUSP00000031410.8"/>
    <property type="gene ID" value="ENSMUSG00000029454.16"/>
</dbReference>
<dbReference type="Ensembl" id="ENSMUST00000111782.8">
    <molecule id="O54992-4"/>
    <property type="protein sequence ID" value="ENSMUSP00000107412.2"/>
    <property type="gene ID" value="ENSMUSG00000029454.16"/>
</dbReference>
<dbReference type="Ensembl" id="ENSMUST00000111783.8">
    <molecule id="O54992-5"/>
    <property type="protein sequence ID" value="ENSMUSP00000107413.2"/>
    <property type="gene ID" value="ENSMUSG00000029454.16"/>
</dbReference>
<dbReference type="Ensembl" id="ENSMUST00000111786.9">
    <molecule id="O54992-3"/>
    <property type="protein sequence ID" value="ENSMUSP00000107416.3"/>
    <property type="gene ID" value="ENSMUSG00000029454.16"/>
</dbReference>
<dbReference type="GeneID" id="17165"/>
<dbReference type="KEGG" id="mmu:17165"/>
<dbReference type="UCSC" id="uc008zjq.1">
    <molecule id="O54992-1"/>
    <property type="organism name" value="mouse"/>
</dbReference>
<dbReference type="UCSC" id="uc008zjr.1">
    <molecule id="O54992-3"/>
    <property type="organism name" value="mouse"/>
</dbReference>
<dbReference type="UCSC" id="uc008zjs.1">
    <molecule id="O54992-4"/>
    <property type="organism name" value="mouse"/>
</dbReference>
<dbReference type="AGR" id="MGI:1333110"/>
<dbReference type="CTD" id="8550"/>
<dbReference type="MGI" id="MGI:1333110">
    <property type="gene designation" value="Mapkapk5"/>
</dbReference>
<dbReference type="VEuPathDB" id="HostDB:ENSMUSG00000029454"/>
<dbReference type="VEuPathDB" id="HostDB:ENSMUSG00000072647"/>
<dbReference type="eggNOG" id="KOG0604">
    <property type="taxonomic scope" value="Eukaryota"/>
</dbReference>
<dbReference type="GeneTree" id="ENSGT00940000154089"/>
<dbReference type="HOGENOM" id="CLU_000288_63_0_1"/>
<dbReference type="InParanoid" id="O54992"/>
<dbReference type="OMA" id="KPYTYDK"/>
<dbReference type="OrthoDB" id="40902at2759"/>
<dbReference type="PhylomeDB" id="O54992"/>
<dbReference type="TreeFam" id="TF312891"/>
<dbReference type="Reactome" id="R-MMU-2559580">
    <property type="pathway name" value="Oxidative Stress Induced Senescence"/>
</dbReference>
<dbReference type="Reactome" id="R-MMU-5687128">
    <property type="pathway name" value="MAPK6/MAPK4 signaling"/>
</dbReference>
<dbReference type="Reactome" id="R-MMU-6804756">
    <property type="pathway name" value="Regulation of TP53 Activity through Phosphorylation"/>
</dbReference>
<dbReference type="BioGRID-ORCS" id="17165">
    <property type="hits" value="1 hit in 33 CRISPR screens"/>
</dbReference>
<dbReference type="ChiTaRS" id="Mapkapk5">
    <property type="organism name" value="mouse"/>
</dbReference>
<dbReference type="PRO" id="PR:O54992"/>
<dbReference type="Proteomes" id="UP000000589">
    <property type="component" value="Chromosome 5"/>
</dbReference>
<dbReference type="RNAct" id="O54992">
    <property type="molecule type" value="protein"/>
</dbReference>
<dbReference type="Bgee" id="ENSMUSG00000029454">
    <property type="expression patterns" value="Expressed in zone of skin and 63 other cell types or tissues"/>
</dbReference>
<dbReference type="ExpressionAtlas" id="O54992">
    <property type="expression patterns" value="baseline and differential"/>
</dbReference>
<dbReference type="GO" id="GO:0005737">
    <property type="term" value="C:cytoplasm"/>
    <property type="evidence" value="ECO:0000314"/>
    <property type="project" value="UniProtKB"/>
</dbReference>
<dbReference type="GO" id="GO:0005829">
    <property type="term" value="C:cytosol"/>
    <property type="evidence" value="ECO:0007669"/>
    <property type="project" value="Ensembl"/>
</dbReference>
<dbReference type="GO" id="GO:0005654">
    <property type="term" value="C:nucleoplasm"/>
    <property type="evidence" value="ECO:0007669"/>
    <property type="project" value="Ensembl"/>
</dbReference>
<dbReference type="GO" id="GO:0005634">
    <property type="term" value="C:nucleus"/>
    <property type="evidence" value="ECO:0000314"/>
    <property type="project" value="UniProtKB"/>
</dbReference>
<dbReference type="GO" id="GO:0032991">
    <property type="term" value="C:protein-containing complex"/>
    <property type="evidence" value="ECO:0000314"/>
    <property type="project" value="MGI"/>
</dbReference>
<dbReference type="GO" id="GO:0032156">
    <property type="term" value="C:septin cytoskeleton"/>
    <property type="evidence" value="ECO:0000314"/>
    <property type="project" value="MGI"/>
</dbReference>
<dbReference type="GO" id="GO:0005524">
    <property type="term" value="F:ATP binding"/>
    <property type="evidence" value="ECO:0007669"/>
    <property type="project" value="UniProtKB-KW"/>
</dbReference>
<dbReference type="GO" id="GO:0051019">
    <property type="term" value="F:mitogen-activated protein kinase binding"/>
    <property type="evidence" value="ECO:0000353"/>
    <property type="project" value="UniProtKB"/>
</dbReference>
<dbReference type="GO" id="GO:0002039">
    <property type="term" value="F:p53 binding"/>
    <property type="evidence" value="ECO:0000314"/>
    <property type="project" value="UniProtKB"/>
</dbReference>
<dbReference type="GO" id="GO:0004672">
    <property type="term" value="F:protein kinase activity"/>
    <property type="evidence" value="ECO:0000314"/>
    <property type="project" value="MGI"/>
</dbReference>
<dbReference type="GO" id="GO:0106310">
    <property type="term" value="F:protein serine kinase activity"/>
    <property type="evidence" value="ECO:0007669"/>
    <property type="project" value="RHEA"/>
</dbReference>
<dbReference type="GO" id="GO:0004674">
    <property type="term" value="F:protein serine/threonine kinase activity"/>
    <property type="evidence" value="ECO:0000314"/>
    <property type="project" value="UniProtKB"/>
</dbReference>
<dbReference type="GO" id="GO:0032007">
    <property type="term" value="P:negative regulation of TOR signaling"/>
    <property type="evidence" value="ECO:0000314"/>
    <property type="project" value="UniProtKB"/>
</dbReference>
<dbReference type="GO" id="GO:0060999">
    <property type="term" value="P:positive regulation of dendritic spine development"/>
    <property type="evidence" value="ECO:0000315"/>
    <property type="project" value="MGI"/>
</dbReference>
<dbReference type="GO" id="GO:0032206">
    <property type="term" value="P:positive regulation of telomere maintenance"/>
    <property type="evidence" value="ECO:0007669"/>
    <property type="project" value="Ensembl"/>
</dbReference>
<dbReference type="GO" id="GO:0045944">
    <property type="term" value="P:positive regulation of transcription by RNA polymerase II"/>
    <property type="evidence" value="ECO:0007669"/>
    <property type="project" value="Ensembl"/>
</dbReference>
<dbReference type="GO" id="GO:0046777">
    <property type="term" value="P:protein autophosphorylation"/>
    <property type="evidence" value="ECO:0000250"/>
    <property type="project" value="UniProtKB"/>
</dbReference>
<dbReference type="GO" id="GO:0007265">
    <property type="term" value="P:Ras protein signal transduction"/>
    <property type="evidence" value="ECO:0000315"/>
    <property type="project" value="UniProtKB"/>
</dbReference>
<dbReference type="GO" id="GO:0006417">
    <property type="term" value="P:regulation of translation"/>
    <property type="evidence" value="ECO:0000250"/>
    <property type="project" value="UniProtKB"/>
</dbReference>
<dbReference type="GO" id="GO:0090400">
    <property type="term" value="P:stress-induced premature senescence"/>
    <property type="evidence" value="ECO:0000315"/>
    <property type="project" value="UniProtKB"/>
</dbReference>
<dbReference type="CDD" id="cd14171">
    <property type="entry name" value="STKc_MAPKAPK5"/>
    <property type="match status" value="1"/>
</dbReference>
<dbReference type="FunFam" id="4.10.1170.10:FF:000002">
    <property type="entry name" value="MAP kinase-activated protein kinase 5"/>
    <property type="match status" value="1"/>
</dbReference>
<dbReference type="FunFam" id="1.10.510.10:FF:000179">
    <property type="entry name" value="MAP kinase-activated protein kinase 5 isoform X1"/>
    <property type="match status" value="1"/>
</dbReference>
<dbReference type="FunFam" id="3.30.200.20:FF:000209">
    <property type="entry name" value="MAP kinase-activated protein kinase 5 isoform X1"/>
    <property type="match status" value="1"/>
</dbReference>
<dbReference type="Gene3D" id="4.10.1170.10">
    <property type="entry name" value="MAP kinase activated protein kinase 2"/>
    <property type="match status" value="1"/>
</dbReference>
<dbReference type="Gene3D" id="3.30.200.20">
    <property type="entry name" value="Phosphorylase Kinase, domain 1"/>
    <property type="match status" value="1"/>
</dbReference>
<dbReference type="Gene3D" id="1.10.510.10">
    <property type="entry name" value="Transferase(Phosphotransferase) domain 1"/>
    <property type="match status" value="1"/>
</dbReference>
<dbReference type="InterPro" id="IPR050205">
    <property type="entry name" value="CDPK_Ser/Thr_kinases"/>
</dbReference>
<dbReference type="InterPro" id="IPR011009">
    <property type="entry name" value="Kinase-like_dom_sf"/>
</dbReference>
<dbReference type="InterPro" id="IPR027442">
    <property type="entry name" value="MAPKAPK_C"/>
</dbReference>
<dbReference type="InterPro" id="IPR000719">
    <property type="entry name" value="Prot_kinase_dom"/>
</dbReference>
<dbReference type="InterPro" id="IPR008271">
    <property type="entry name" value="Ser/Thr_kinase_AS"/>
</dbReference>
<dbReference type="PANTHER" id="PTHR24349">
    <property type="entry name" value="SERINE/THREONINE-PROTEIN KINASE"/>
    <property type="match status" value="1"/>
</dbReference>
<dbReference type="Pfam" id="PF00069">
    <property type="entry name" value="Pkinase"/>
    <property type="match status" value="1"/>
</dbReference>
<dbReference type="SMART" id="SM00220">
    <property type="entry name" value="S_TKc"/>
    <property type="match status" value="1"/>
</dbReference>
<dbReference type="SUPFAM" id="SSF56112">
    <property type="entry name" value="Protein kinase-like (PK-like)"/>
    <property type="match status" value="1"/>
</dbReference>
<dbReference type="PROSITE" id="PS50011">
    <property type="entry name" value="PROTEIN_KINASE_DOM"/>
    <property type="match status" value="1"/>
</dbReference>
<dbReference type="PROSITE" id="PS00108">
    <property type="entry name" value="PROTEIN_KINASE_ST"/>
    <property type="match status" value="1"/>
</dbReference>
<feature type="chain" id="PRO_0000086297" description="MAP kinase-activated protein kinase 5">
    <location>
        <begin position="1"/>
        <end position="473"/>
    </location>
</feature>
<feature type="domain" description="Protein kinase" evidence="4">
    <location>
        <begin position="22"/>
        <end position="304"/>
    </location>
</feature>
<feature type="coiled-coil region" evidence="3">
    <location>
        <begin position="409"/>
        <end position="440"/>
    </location>
</feature>
<feature type="active site" description="Proton acceptor" evidence="4 5">
    <location>
        <position position="148"/>
    </location>
</feature>
<feature type="binding site" evidence="4">
    <location>
        <begin position="28"/>
        <end position="36"/>
    </location>
    <ligand>
        <name>ATP</name>
        <dbReference type="ChEBI" id="CHEBI:30616"/>
    </ligand>
</feature>
<feature type="binding site" evidence="21">
    <location>
        <position position="51"/>
    </location>
    <ligand>
        <name>ATP</name>
        <dbReference type="ChEBI" id="CHEBI:30616"/>
    </ligand>
</feature>
<feature type="modified residue" description="Phosphoserine; by PKA" evidence="16">
    <location>
        <position position="115"/>
    </location>
</feature>
<feature type="modified residue" description="Phosphothreonine; by MAPK11, MAPK14, MAPK4, MAPK6 and PKA" evidence="7 8">
    <location>
        <position position="182"/>
    </location>
</feature>
<feature type="modified residue" description="Phosphoserine" evidence="2">
    <location>
        <position position="212"/>
    </location>
</feature>
<feature type="modified residue" description="Phosphoserine" evidence="2">
    <location>
        <position position="354"/>
    </location>
</feature>
<feature type="splice variant" id="VSP_011599" description="In isoform 3 and isoform 4." evidence="20">
    <location>
        <begin position="13"/>
        <end position="161"/>
    </location>
</feature>
<feature type="splice variant" id="VSP_011600" description="In isoform 2." evidence="20">
    <original>DLKVSLKPLHSVNNPILRKRKLLGTKPKDGIYIHDHENGTEDSNVALEKLRDVIAQCILPQAGKG</original>
    <variation>E</variation>
    <location>
        <begin position="344"/>
        <end position="408"/>
    </location>
</feature>
<feature type="splice variant" id="VSP_011598" description="In isoform 4 and isoform 5." evidence="20">
    <location>
        <begin position="407"/>
        <end position="408"/>
    </location>
</feature>
<feature type="mutagenesis site" description="No p38-alpha/MAPK14-, p38-beta/MAPK11-, ERK3/MAPK6-, ERK4/MAPK4-induced activation." evidence="7 10 17 19">
    <original>K</original>
    <variation>E</variation>
    <location>
        <position position="51"/>
    </location>
</feature>
<feature type="mutagenesis site" description="Kinase defective mutant, abolishes activity." evidence="7 10 17 19">
    <original>K</original>
    <variation>R</variation>
    <variation>M</variation>
    <location>
        <position position="51"/>
    </location>
</feature>
<feature type="mutagenesis site" description="Impairs shuttling to the cytoplasm." evidence="16">
    <original>S</original>
    <variation>A</variation>
    <location>
        <position position="115"/>
    </location>
</feature>
<feature type="mutagenesis site" description="Mimicks phosphorylation state, leading to localization to the cytoplasm." evidence="16">
    <original>S</original>
    <variation>D</variation>
    <location>
        <position position="115"/>
    </location>
</feature>
<feature type="mutagenesis site" description="Impairs protein kinase activity and shuttling to the cytoplasm." evidence="7 8 10 15">
    <original>T</original>
    <variation>A</variation>
    <location>
        <position position="182"/>
    </location>
</feature>
<feature type="mutagenesis site" description="Constitutive active mutant. In a knockin model, mouse display increased amounts of head dips and open arm time on the maze, compared to littermate controls. In addition, they also explore further into the open arm on the elevated plus maze and are less active in the closed arm compared to littermate controls. Male knockin mice display no differences in anxiety, but their locomotor activity increases compared to non-transgenic littermates." evidence="11">
    <original>L</original>
    <variation>A</variation>
    <location>
        <position position="337"/>
    </location>
</feature>
<accession>O54992</accession>
<accession>E9QQ45</accession>
<accession>Q6QME4</accession>
<accession>Q6QME5</accession>
<accession>Q6QME6</accession>
<accession>Q6QME7</accession>